<proteinExistence type="evidence at transcript level"/>
<sequence length="462" mass="50141">MGKEKTHINIVVIGHVDSGKSTTTGHLIYKCGGIDKRTIEKFEKEAAEMGKGSFKYAWVLDKLKAERERGITIDISLWKFETSKYYVTIIDAPGHRDFIKNMITGTSQADCAVLIVAAGVGEFEAGISKNGQTREHALLAYTLGVKQLIVGVNKMDSTEPPYSQKRYEEIVKEVSTYIKKIGYNPDTVAFVPISGWNGDNMLEPSANMPWFKGWKVTRKDGNASGTTLLEALDCILPPTRPTDKPLRLPLQDVYKIGGIGTVPVGRVETGVLKPGMVVTFAPVNVTTEVKSVEMHHEALSEALPGDNVGFNVKNVSVKDVRRGNVAGDSKNDPPMEAAGFTAQVIILNHPGQISAGYAPVLDCHTAHIACKFAELKEKIDRRSGKKLEDGPKFLKSGDAAIVDMVPGKPMCVESFSDYPPLGRFAVRDMRQTVAVGVIKAVDKKAAGAGKVTKSAQKAQKAK</sequence>
<reference key="1">
    <citation type="submission" date="2004-08" db="EMBL/GenBank/DDBJ databases">
        <authorList>
            <person name="Hirai M."/>
            <person name="Sakate R."/>
            <person name="Hida M."/>
            <person name="Sugano S."/>
            <person name="Hayasaka I."/>
            <person name="Suto Y."/>
            <person name="Osada N."/>
            <person name="Hashimoto K."/>
        </authorList>
    </citation>
    <scope>NUCLEOTIDE SEQUENCE [MRNA]</scope>
    <source>
        <tissue>Cerebellum</tissue>
    </source>
</reference>
<evidence type="ECO:0000250" key="1">
    <source>
        <dbReference type="UniProtKB" id="P10126"/>
    </source>
</evidence>
<evidence type="ECO:0000250" key="2">
    <source>
        <dbReference type="UniProtKB" id="P62630"/>
    </source>
</evidence>
<evidence type="ECO:0000250" key="3">
    <source>
        <dbReference type="UniProtKB" id="P68104"/>
    </source>
</evidence>
<evidence type="ECO:0000250" key="4">
    <source>
        <dbReference type="UniProtKB" id="P68105"/>
    </source>
</evidence>
<evidence type="ECO:0000255" key="5"/>
<evidence type="ECO:0000305" key="6"/>
<keyword id="KW-0007">Acetylation</keyword>
<keyword id="KW-1003">Cell membrane</keyword>
<keyword id="KW-0963">Cytoplasm</keyword>
<keyword id="KW-0251">Elongation factor</keyword>
<keyword id="KW-0342">GTP-binding</keyword>
<keyword id="KW-0378">Hydrolase</keyword>
<keyword id="KW-1017">Isopeptide bond</keyword>
<keyword id="KW-0472">Membrane</keyword>
<keyword id="KW-0488">Methylation</keyword>
<keyword id="KW-0547">Nucleotide-binding</keyword>
<keyword id="KW-0539">Nucleus</keyword>
<keyword id="KW-0597">Phosphoprotein</keyword>
<keyword id="KW-0648">Protein biosynthesis</keyword>
<keyword id="KW-1185">Reference proteome</keyword>
<keyword id="KW-0832">Ubl conjugation</keyword>
<gene>
    <name type="primary">EEF1A1</name>
    <name type="synonym">EEF1A</name>
</gene>
<accession>Q5R1X2</accession>
<protein>
    <recommendedName>
        <fullName>Elongation factor 1-alpha 1</fullName>
        <shortName>EF-1-alpha-1</shortName>
        <ecNumber evidence="3">3.6.5.-</ecNumber>
    </recommendedName>
    <alternativeName>
        <fullName>Elongation factor Tu</fullName>
        <shortName>EF-Tu</shortName>
    </alternativeName>
    <alternativeName>
        <fullName>Eukaryotic elongation factor 1 A-1</fullName>
        <shortName>eEF1A-1</shortName>
    </alternativeName>
</protein>
<name>EF1A1_PANTR</name>
<feature type="initiator methionine" description="Removed" evidence="3">
    <location>
        <position position="1"/>
    </location>
</feature>
<feature type="chain" id="PRO_0000090887" description="Elongation factor 1-alpha 1">
    <location>
        <begin position="2"/>
        <end position="462"/>
    </location>
</feature>
<feature type="domain" description="tr-type G">
    <location>
        <begin position="5"/>
        <end position="242"/>
    </location>
</feature>
<feature type="region of interest" description="G1" evidence="5">
    <location>
        <begin position="14"/>
        <end position="21"/>
    </location>
</feature>
<feature type="region of interest" description="G2" evidence="5">
    <location>
        <begin position="70"/>
        <end position="74"/>
    </location>
</feature>
<feature type="region of interest" description="G3" evidence="5">
    <location>
        <begin position="91"/>
        <end position="94"/>
    </location>
</feature>
<feature type="region of interest" description="G4" evidence="5">
    <location>
        <begin position="153"/>
        <end position="156"/>
    </location>
</feature>
<feature type="region of interest" description="G5" evidence="5">
    <location>
        <begin position="194"/>
        <end position="196"/>
    </location>
</feature>
<feature type="binding site" evidence="4">
    <location>
        <begin position="14"/>
        <end position="21"/>
    </location>
    <ligand>
        <name>GTP</name>
        <dbReference type="ChEBI" id="CHEBI:37565"/>
    </ligand>
</feature>
<feature type="binding site" evidence="4">
    <location>
        <begin position="153"/>
        <end position="156"/>
    </location>
    <ligand>
        <name>GTP</name>
        <dbReference type="ChEBI" id="CHEBI:37565"/>
    </ligand>
</feature>
<feature type="binding site" evidence="4">
    <location>
        <begin position="194"/>
        <end position="196"/>
    </location>
    <ligand>
        <name>GTP</name>
        <dbReference type="ChEBI" id="CHEBI:37565"/>
    </ligand>
</feature>
<feature type="modified residue" description="N,N,N-trimethylglycine" evidence="3">
    <location>
        <position position="2"/>
    </location>
</feature>
<feature type="modified residue" description="N6,N6,N6-trimethyllysine; alternate" evidence="3">
    <location>
        <position position="36"/>
    </location>
</feature>
<feature type="modified residue" description="N6,N6-dimethyllysine; alternate" evidence="3">
    <location>
        <position position="36"/>
    </location>
</feature>
<feature type="modified residue" description="N6-methyllysine; alternate" evidence="3">
    <location>
        <position position="36"/>
    </location>
</feature>
<feature type="modified residue" description="N6,N6-dimethyllysine" evidence="3">
    <location>
        <position position="55"/>
    </location>
</feature>
<feature type="modified residue" description="N6,N6,N6-trimethyllysine; by EEF1AKMT1" evidence="3">
    <location>
        <position position="79"/>
    </location>
</feature>
<feature type="modified residue" description="N6,N6,N6-trimethyllysine; alternate; by EEF1AKMT3" evidence="3">
    <location>
        <position position="165"/>
    </location>
</feature>
<feature type="modified residue" description="N6,N6-dimethyllysine; alternate; by EEF1AKMT3" evidence="3">
    <location>
        <position position="165"/>
    </location>
</feature>
<feature type="modified residue" description="N6-acetyllysine; alternate" evidence="1">
    <location>
        <position position="165"/>
    </location>
</feature>
<feature type="modified residue" description="N6-methyllysine; alternate; by EEF1AKMT3" evidence="3">
    <location>
        <position position="165"/>
    </location>
</feature>
<feature type="modified residue" description="N6-acetyllysine" evidence="1">
    <location>
        <position position="172"/>
    </location>
</feature>
<feature type="modified residue" description="N6-acetyllysine" evidence="1">
    <location>
        <position position="273"/>
    </location>
</feature>
<feature type="modified residue" description="Phosphoserine; by TGFBR1" evidence="3">
    <location>
        <position position="300"/>
    </location>
</feature>
<feature type="modified residue" description="5-glutamyl glycerylphosphorylethanolamine" evidence="3">
    <location>
        <position position="301"/>
    </location>
</feature>
<feature type="modified residue" description="N6,N6,N6-trimethyllysine; by EEF1AKMT2" evidence="3">
    <location>
        <position position="318"/>
    </location>
</feature>
<feature type="modified residue" description="5-glutamyl glycerylphosphorylethanolamine" evidence="3">
    <location>
        <position position="374"/>
    </location>
</feature>
<feature type="modified residue" description="N6-acetyllysine; alternate" evidence="1">
    <location>
        <position position="392"/>
    </location>
</feature>
<feature type="modified residue" description="N6-succinyllysine; alternate" evidence="1">
    <location>
        <position position="392"/>
    </location>
</feature>
<feature type="modified residue" description="Phosphothreonine; by PASK" evidence="3">
    <location>
        <position position="432"/>
    </location>
</feature>
<feature type="modified residue" description="N6-acetyllysine" evidence="1">
    <location>
        <position position="439"/>
    </location>
</feature>
<feature type="cross-link" description="Glycyl lysine isopeptide (Lys-Gly) (interchain with G-Cter in ubiquitin)" evidence="3">
    <location>
        <position position="385"/>
    </location>
</feature>
<organism>
    <name type="scientific">Pan troglodytes</name>
    <name type="common">Chimpanzee</name>
    <dbReference type="NCBI Taxonomy" id="9598"/>
    <lineage>
        <taxon>Eukaryota</taxon>
        <taxon>Metazoa</taxon>
        <taxon>Chordata</taxon>
        <taxon>Craniata</taxon>
        <taxon>Vertebrata</taxon>
        <taxon>Euteleostomi</taxon>
        <taxon>Mammalia</taxon>
        <taxon>Eutheria</taxon>
        <taxon>Euarchontoglires</taxon>
        <taxon>Primates</taxon>
        <taxon>Haplorrhini</taxon>
        <taxon>Catarrhini</taxon>
        <taxon>Hominidae</taxon>
        <taxon>Pan</taxon>
    </lineage>
</organism>
<comment type="function">
    <text evidence="3 4">Translation elongation factor that catalyzes the GTP-dependent binding of aminoacyl-tRNA (aa-tRNA) to the A-site of ribosomes during the elongation phase of protein synthesis. Base pairing between the mRNA codon and the aa-tRNA anticodon promotes GTP hydrolysis, releasing the aa-tRNA from EEF1A1 and allowing its accommodation into the ribosome. The growing protein chain is subsequently transferred from the P-site peptidyl tRNA to the A-site aa-tRNA, extending it by one amino acid through ribosome-catalyzed peptide bond formation. Also plays a role in the positive regulation of IFNG transcription in T-helper 1 cells as part of an IFNG promoter-binding complex with TXK and PARP1 (By similarity). Also plays a role in cytoskeleton organization by promoting actin bundling (By similarity).</text>
</comment>
<comment type="catalytic activity">
    <reaction evidence="3">
        <text>GTP + H2O = GDP + phosphate + H(+)</text>
        <dbReference type="Rhea" id="RHEA:19669"/>
        <dbReference type="ChEBI" id="CHEBI:15377"/>
        <dbReference type="ChEBI" id="CHEBI:15378"/>
        <dbReference type="ChEBI" id="CHEBI:37565"/>
        <dbReference type="ChEBI" id="CHEBI:43474"/>
        <dbReference type="ChEBI" id="CHEBI:58189"/>
    </reaction>
    <physiologicalReaction direction="left-to-right" evidence="3">
        <dbReference type="Rhea" id="RHEA:19670"/>
    </physiologicalReaction>
</comment>
<comment type="subunit">
    <text evidence="2 3">Found in a nuclear export complex with XPO5, EEF1A1, Ran and aminoacylated tRNA. Interacts with PARP1 and TXK. Interacts with KARS1. May interact with ERGIC2. Interacts with IFIT1 (via TPR repeats 4-7) (By similarity). Interacts with DLC1, facilitating distribution to the membrane periphery and ruffles upon growth factor stimulation. Interacts with ZPR1; the interaction occurs in a epidermal growth factor (EGF)-dependent manner (By similarity). Interacts with PPP1R16B (By similarity). Interacts with SPHK1 and SPHK2; both interactions increase SPHK1 and SPHK2 kinase activity (By similarity). Interacts with guanyl-nucleotide exchange factor EEF1B2 (By similarity). Interacts (via middle-region) with HTATIP2 (via N-terminus); the interaction is direct and competes with EEF1A1 binding to guanyl-nucleotide exchange factor EEF1B2, thereby inhibiting GDP for GTP exchange and reactivation of EEF1A1 (By similarity). Interacts with tRNA (By similarity).</text>
</comment>
<comment type="subcellular location">
    <subcellularLocation>
        <location evidence="3">Cytoplasm</location>
    </subcellularLocation>
    <subcellularLocation>
        <location evidence="3">Nucleus</location>
    </subcellularLocation>
    <subcellularLocation>
        <location evidence="3">Nucleus</location>
        <location evidence="3">Nucleolus</location>
    </subcellularLocation>
    <subcellularLocation>
        <location evidence="3">Cell membrane</location>
    </subcellularLocation>
    <text evidence="3">Colocalizes with DLC1 at actin-rich regions in the cell periphery. Translocates together with ZPR1 from the cytoplasm to the nucleus and nucleolus after treatment with mitogens. Localization at the cell membrane depends on EEF1A1 phosphorylation status and the presence of PPP1R16B.</text>
</comment>
<comment type="PTM">
    <text evidence="3">ISGylated.</text>
</comment>
<comment type="PTM">
    <text evidence="3">Phosphorylated by TXK. Phosphorylation by PASK increases translation efficiency. Phosphorylated by ROCK2. Phosphorylation by TGFBR1 inhibits translation elongation.</text>
</comment>
<comment type="PTM">
    <text evidence="3">Trimethylated at Lys-79 by EEF1AKMT1. Methylated at Lys-165 by EEF1AKMT3, methylation by EEF1AKMT3 is dynamic as well as inducible by stress conditions, such as ER-stress, and plays a regulatory role on mRNA translation. Trimethylated at Lys-318 by EEF1AKMT2. Mono-, di-, and trimethylated at Lys-36 by EEF1AKMT4; trimethylated form is predominant. Methylation by EEF1AKMT4 contributes to the fine-tuning of translation rates for a subset of tRNAs. Trimethylated at Gly-2 by METTL13. Mono- and dimethylated at Lys-55 by METTL13; dimethylated form is predominant.</text>
</comment>
<comment type="PTM">
    <text evidence="3">Ubiquitinated at Lys-385 by RNF14 in response to ribosome collisions (ribosome stalling), leading to its degradation by the proteasome and rescue of stalled ribosomes.</text>
</comment>
<comment type="similarity">
    <text evidence="6">Belongs to the TRAFAC class translation factor GTPase superfamily. Classic translation factor GTPase family. EF-Tu/EF-1A subfamily.</text>
</comment>
<dbReference type="EC" id="3.6.5.-" evidence="3"/>
<dbReference type="EMBL" id="AB188275">
    <property type="protein sequence ID" value="BAD74026.1"/>
    <property type="molecule type" value="mRNA"/>
</dbReference>
<dbReference type="RefSeq" id="NP_001009165.1">
    <property type="nucleotide sequence ID" value="NM_001009165.1"/>
</dbReference>
<dbReference type="RefSeq" id="XP_009449809.1">
    <property type="nucleotide sequence ID" value="XM_009451534.2"/>
</dbReference>
<dbReference type="RefSeq" id="XP_054541504.1">
    <property type="nucleotide sequence ID" value="XM_054685529.2"/>
</dbReference>
<dbReference type="RefSeq" id="XP_063668080.1">
    <property type="nucleotide sequence ID" value="XM_063812010.1"/>
</dbReference>
<dbReference type="RefSeq" id="XP_063668081.1">
    <property type="nucleotide sequence ID" value="XM_063812011.1"/>
</dbReference>
<dbReference type="SMR" id="Q5R1X2"/>
<dbReference type="FunCoup" id="Q5R1X2">
    <property type="interactions" value="2087"/>
</dbReference>
<dbReference type="STRING" id="9598.ENSPTRP00000045593"/>
<dbReference type="PaxDb" id="9598-ENSPTRP00000045593"/>
<dbReference type="Ensembl" id="ENSPTRT00000048233.4">
    <property type="protein sequence ID" value="ENSPTRP00000045593.3"/>
    <property type="gene ID" value="ENSPTRG00000018347.7"/>
</dbReference>
<dbReference type="GeneID" id="494136"/>
<dbReference type="CTD" id="1915"/>
<dbReference type="VGNC" id="VGNC:11066">
    <property type="gene designation" value="EEF1A1"/>
</dbReference>
<dbReference type="eggNOG" id="KOG0052">
    <property type="taxonomic scope" value="Eukaryota"/>
</dbReference>
<dbReference type="GeneTree" id="ENSGT00950000183029"/>
<dbReference type="HOGENOM" id="CLU_007265_3_5_1"/>
<dbReference type="InParanoid" id="Q5R1X2"/>
<dbReference type="OMA" id="FAPQNIT"/>
<dbReference type="TreeFam" id="TF300304"/>
<dbReference type="Proteomes" id="UP000002277">
    <property type="component" value="Chromosome 6"/>
</dbReference>
<dbReference type="Bgee" id="ENSPTRG00000018347">
    <property type="expression patterns" value="Expressed in Brodmann (1909) area 10 and 20 other cell types or tissues"/>
</dbReference>
<dbReference type="GO" id="GO:0005737">
    <property type="term" value="C:cytoplasm"/>
    <property type="evidence" value="ECO:0000250"/>
    <property type="project" value="UniProtKB"/>
</dbReference>
<dbReference type="GO" id="GO:0005730">
    <property type="term" value="C:nucleolus"/>
    <property type="evidence" value="ECO:0000250"/>
    <property type="project" value="UniProtKB"/>
</dbReference>
<dbReference type="GO" id="GO:0005634">
    <property type="term" value="C:nucleus"/>
    <property type="evidence" value="ECO:0000250"/>
    <property type="project" value="UniProtKB"/>
</dbReference>
<dbReference type="GO" id="GO:0005886">
    <property type="term" value="C:plasma membrane"/>
    <property type="evidence" value="ECO:0000250"/>
    <property type="project" value="UniProtKB"/>
</dbReference>
<dbReference type="GO" id="GO:0005525">
    <property type="term" value="F:GTP binding"/>
    <property type="evidence" value="ECO:0007669"/>
    <property type="project" value="UniProtKB-KW"/>
</dbReference>
<dbReference type="GO" id="GO:0003924">
    <property type="term" value="F:GTPase activity"/>
    <property type="evidence" value="ECO:0000250"/>
    <property type="project" value="UniProtKB"/>
</dbReference>
<dbReference type="GO" id="GO:0019209">
    <property type="term" value="F:kinase activator activity"/>
    <property type="evidence" value="ECO:0000250"/>
    <property type="project" value="UniProtKB"/>
</dbReference>
<dbReference type="GO" id="GO:0003746">
    <property type="term" value="F:translation elongation factor activity"/>
    <property type="evidence" value="ECO:0000250"/>
    <property type="project" value="UniProtKB"/>
</dbReference>
<dbReference type="GO" id="GO:0071364">
    <property type="term" value="P:cellular response to epidermal growth factor stimulus"/>
    <property type="evidence" value="ECO:0000250"/>
    <property type="project" value="UniProtKB"/>
</dbReference>
<dbReference type="GO" id="GO:0006412">
    <property type="term" value="P:translation"/>
    <property type="evidence" value="ECO:0000318"/>
    <property type="project" value="GO_Central"/>
</dbReference>
<dbReference type="GO" id="GO:0006414">
    <property type="term" value="P:translational elongation"/>
    <property type="evidence" value="ECO:0000250"/>
    <property type="project" value="UniProtKB"/>
</dbReference>
<dbReference type="CDD" id="cd01883">
    <property type="entry name" value="EF1_alpha"/>
    <property type="match status" value="1"/>
</dbReference>
<dbReference type="CDD" id="cd03693">
    <property type="entry name" value="EF1_alpha_II"/>
    <property type="match status" value="1"/>
</dbReference>
<dbReference type="CDD" id="cd03705">
    <property type="entry name" value="EF1_alpha_III"/>
    <property type="match status" value="1"/>
</dbReference>
<dbReference type="FunFam" id="2.40.30.10:FF:000005">
    <property type="entry name" value="Elongation factor 1-alpha"/>
    <property type="match status" value="1"/>
</dbReference>
<dbReference type="FunFam" id="3.40.50.300:FF:000090">
    <property type="entry name" value="Elongation factor 1-alpha"/>
    <property type="match status" value="1"/>
</dbReference>
<dbReference type="FunFam" id="2.40.30.10:FF:000168">
    <property type="entry name" value="Elongation factor 1-alpha 2"/>
    <property type="match status" value="1"/>
</dbReference>
<dbReference type="Gene3D" id="3.40.50.300">
    <property type="entry name" value="P-loop containing nucleotide triphosphate hydrolases"/>
    <property type="match status" value="1"/>
</dbReference>
<dbReference type="Gene3D" id="2.40.30.10">
    <property type="entry name" value="Translation factors"/>
    <property type="match status" value="2"/>
</dbReference>
<dbReference type="HAMAP" id="MF_00118_A">
    <property type="entry name" value="EF_Tu_A"/>
    <property type="match status" value="1"/>
</dbReference>
<dbReference type="InterPro" id="IPR004161">
    <property type="entry name" value="EFTu-like_2"/>
</dbReference>
<dbReference type="InterPro" id="IPR031157">
    <property type="entry name" value="G_TR_CS"/>
</dbReference>
<dbReference type="InterPro" id="IPR054696">
    <property type="entry name" value="GTP-eEF1A_C"/>
</dbReference>
<dbReference type="InterPro" id="IPR027417">
    <property type="entry name" value="P-loop_NTPase"/>
</dbReference>
<dbReference type="InterPro" id="IPR000795">
    <property type="entry name" value="T_Tr_GTP-bd_dom"/>
</dbReference>
<dbReference type="InterPro" id="IPR050100">
    <property type="entry name" value="TRAFAC_GTPase_members"/>
</dbReference>
<dbReference type="InterPro" id="IPR009000">
    <property type="entry name" value="Transl_B-barrel_sf"/>
</dbReference>
<dbReference type="InterPro" id="IPR009001">
    <property type="entry name" value="Transl_elong_EF1A/Init_IF2_C"/>
</dbReference>
<dbReference type="InterPro" id="IPR004539">
    <property type="entry name" value="Transl_elong_EF1A_euk/arc"/>
</dbReference>
<dbReference type="NCBIfam" id="TIGR00483">
    <property type="entry name" value="EF-1_alpha"/>
    <property type="match status" value="1"/>
</dbReference>
<dbReference type="NCBIfam" id="NF008969">
    <property type="entry name" value="PRK12317.1"/>
    <property type="match status" value="1"/>
</dbReference>
<dbReference type="PANTHER" id="PTHR23115">
    <property type="entry name" value="TRANSLATION FACTOR"/>
    <property type="match status" value="1"/>
</dbReference>
<dbReference type="Pfam" id="PF22594">
    <property type="entry name" value="GTP-eEF1A_C"/>
    <property type="match status" value="1"/>
</dbReference>
<dbReference type="Pfam" id="PF00009">
    <property type="entry name" value="GTP_EFTU"/>
    <property type="match status" value="1"/>
</dbReference>
<dbReference type="Pfam" id="PF03144">
    <property type="entry name" value="GTP_EFTU_D2"/>
    <property type="match status" value="1"/>
</dbReference>
<dbReference type="PRINTS" id="PR00315">
    <property type="entry name" value="ELONGATNFCT"/>
</dbReference>
<dbReference type="SUPFAM" id="SSF50465">
    <property type="entry name" value="EF-Tu/eEF-1alpha/eIF2-gamma C-terminal domain"/>
    <property type="match status" value="1"/>
</dbReference>
<dbReference type="SUPFAM" id="SSF52540">
    <property type="entry name" value="P-loop containing nucleoside triphosphate hydrolases"/>
    <property type="match status" value="1"/>
</dbReference>
<dbReference type="SUPFAM" id="SSF50447">
    <property type="entry name" value="Translation proteins"/>
    <property type="match status" value="1"/>
</dbReference>
<dbReference type="PROSITE" id="PS00301">
    <property type="entry name" value="G_TR_1"/>
    <property type="match status" value="1"/>
</dbReference>
<dbReference type="PROSITE" id="PS51722">
    <property type="entry name" value="G_TR_2"/>
    <property type="match status" value="1"/>
</dbReference>